<comment type="function">
    <text evidence="1">Involved in fatty acylation of the protoxin (LktA) at two internal lysine residues, thereby converting it to the active toxin.</text>
</comment>
<comment type="catalytic activity">
    <reaction evidence="2">
        <text>a fatty acyl-[ACP] + L-lysyl-[protein] = N(6)-(fatty acyl)-L-lysyl-[protein] + holo-[ACP] + H(+)</text>
        <dbReference type="Rhea" id="RHEA:70667"/>
        <dbReference type="Rhea" id="RHEA-COMP:9685"/>
        <dbReference type="Rhea" id="RHEA-COMP:9752"/>
        <dbReference type="Rhea" id="RHEA-COMP:14125"/>
        <dbReference type="Rhea" id="RHEA-COMP:17946"/>
        <dbReference type="ChEBI" id="CHEBI:15378"/>
        <dbReference type="ChEBI" id="CHEBI:29969"/>
        <dbReference type="ChEBI" id="CHEBI:64479"/>
        <dbReference type="ChEBI" id="CHEBI:138651"/>
        <dbReference type="ChEBI" id="CHEBI:189854"/>
    </reaction>
    <physiologicalReaction direction="left-to-right" evidence="2">
        <dbReference type="Rhea" id="RHEA:70668"/>
    </physiologicalReaction>
</comment>
<comment type="subcellular location">
    <subcellularLocation>
        <location evidence="3">Cytoplasm</location>
    </subcellularLocation>
</comment>
<comment type="similarity">
    <text evidence="3">Belongs to the RTX toxin acyltransferase family.</text>
</comment>
<protein>
    <recommendedName>
        <fullName>Leukotoxin-activating lysine-acyltransferase LktC serotype T3</fullName>
        <shortName>Leukotoxin C</shortName>
        <shortName>Toxin-activating protein C</shortName>
        <ecNumber evidence="2">2.3.1.-</ecNumber>
    </recommendedName>
</protein>
<dbReference type="EC" id="2.3.1.-" evidence="2"/>
<dbReference type="EMBL" id="U01216">
    <property type="protein sequence ID" value="AAB36690.1"/>
    <property type="molecule type" value="Unassigned_DNA"/>
</dbReference>
<dbReference type="SMR" id="P55120"/>
<dbReference type="GO" id="GO:0005737">
    <property type="term" value="C:cytoplasm"/>
    <property type="evidence" value="ECO:0007669"/>
    <property type="project" value="UniProtKB-SubCell"/>
</dbReference>
<dbReference type="GO" id="GO:0016746">
    <property type="term" value="F:acyltransferase activity"/>
    <property type="evidence" value="ECO:0007669"/>
    <property type="project" value="UniProtKB-KW"/>
</dbReference>
<dbReference type="GO" id="GO:0031640">
    <property type="term" value="P:killing of cells of another organism"/>
    <property type="evidence" value="ECO:0007669"/>
    <property type="project" value="UniProtKB-KW"/>
</dbReference>
<dbReference type="GO" id="GO:0009404">
    <property type="term" value="P:toxin metabolic process"/>
    <property type="evidence" value="ECO:0007669"/>
    <property type="project" value="InterPro"/>
</dbReference>
<dbReference type="InterPro" id="IPR003996">
    <property type="entry name" value="RTX_toxin-activating_protC_bac"/>
</dbReference>
<dbReference type="Pfam" id="PF02794">
    <property type="entry name" value="HlyC"/>
    <property type="match status" value="1"/>
</dbReference>
<dbReference type="PRINTS" id="PR01489">
    <property type="entry name" value="RTXTOXINC"/>
</dbReference>
<accession>P55120</accession>
<gene>
    <name type="primary">lktC</name>
</gene>
<organism>
    <name type="scientific">Mannheimia haemolytica</name>
    <name type="common">Pasteurella haemolytica</name>
    <dbReference type="NCBI Taxonomy" id="75985"/>
    <lineage>
        <taxon>Bacteria</taxon>
        <taxon>Pseudomonadati</taxon>
        <taxon>Pseudomonadota</taxon>
        <taxon>Gammaproteobacteria</taxon>
        <taxon>Pasteurellales</taxon>
        <taxon>Pasteurellaceae</taxon>
        <taxon>Mannheimia</taxon>
    </lineage>
</organism>
<keyword id="KW-0012">Acyltransferase</keyword>
<keyword id="KW-0204">Cytolysis</keyword>
<keyword id="KW-0963">Cytoplasm</keyword>
<keyword id="KW-0354">Hemolysis</keyword>
<keyword id="KW-0808">Transferase</keyword>
<evidence type="ECO:0000250" key="1">
    <source>
        <dbReference type="UniProtKB" id="P16461"/>
    </source>
</evidence>
<evidence type="ECO:0000250" key="2">
    <source>
        <dbReference type="UniProtKB" id="P55132"/>
    </source>
</evidence>
<evidence type="ECO:0000305" key="3"/>
<reference key="1">
    <citation type="journal article" date="1993" name="Infect. Immun.">
        <title>Molecular analysis of the leukotoxin determinants from Pasteurella haemolytica serotypes 1 to 16.</title>
        <authorList>
            <person name="Burrows L.L."/>
            <person name="Olah-Winfield E."/>
            <person name="Lo R.Y.C."/>
        </authorList>
    </citation>
    <scope>NUCLEOTIDE SEQUENCE [GENOMIC DNA]</scope>
    <source>
        <strain>Serotype T3</strain>
    </source>
</reference>
<feature type="chain" id="PRO_0000217880" description="Leukotoxin-activating lysine-acyltransferase LktC serotype T3">
    <location>
        <begin position="1"/>
        <end position="167"/>
    </location>
</feature>
<feature type="active site" evidence="2">
    <location>
        <position position="22"/>
    </location>
</feature>
<feature type="active site" evidence="2">
    <location>
        <position position="91"/>
    </location>
</feature>
<sequence>MKGNNFNLLGNITWLWMNSSLHKEWSCKLLACNVIPAIENEQYMLLVDNGIPIAYCSWADLNLETEVKYIKDISSLTSDEWQSGDRRWIIDWVAPFGHSQLLYKKMCQKYPDMIVRAIRFYPKQKELGKITYFKGGKLDKKTAKERFDIYQEELATALKNEFNFIEK</sequence>
<name>LKTC3_MANHA</name>
<proteinExistence type="inferred from homology"/>